<accession>P30883</accession>
<accession>Q5D080</accession>
<sequence>MREIVHLQAGQCGNQIGAKFWEVISDEHGIDPTGAYHGDSDLQLERINVYYNEATGGKYVPRAVLVDLEPGTMDSVRSGPFGQIFRPDNFVFGQSGAGNNWAKGHYTEGAELVDSVLDVVRKEAESCDCLQGFQLTHSLGGGTGSGMGTLLISKIREEYPDRIMNTFSVVPSPKVSDTVVEPYNATLSVHQLVENTDETYCIDNEALYDICFRTLKLTTPTYGDLNHLVSATMSGVTTCLRFPGQLNADLRKLAVNMVPFPRLHFFMPGFAPLTSRGSQQYRALTVPELTQQMFDAKNMMAACDPRHGRYLTVAAIFRGRMSMKEVDEQMLNVQNKNSSYFVEWIPNNVKTAVCDIPPRGLKMSATFIGNSTAIQELFKRISEQFTAMFRRKAFLHWYTGEGMDEMEFTEAESNMNDLVSEYQQYQDATAEEEGEFEEGEEEENA</sequence>
<gene>
    <name type="primary">tubb4</name>
</gene>
<comment type="function">
    <text>Tubulin is the major constituent of microtubules, a cylinder consisting of laterally associated linear protofilaments composed of alpha- and beta-tubulin heterodimers. Microtubules grow by the addition of GTP-tubulin dimers to the microtubule end, where a stabilizing cap forms. Below the cap, tubulin dimers are in GDP-bound state, owing to GTPase activity of alpha-tubulin.</text>
</comment>
<comment type="cofactor">
    <cofactor evidence="3">
        <name>Mg(2+)</name>
        <dbReference type="ChEBI" id="CHEBI:18420"/>
    </cofactor>
</comment>
<comment type="subunit">
    <text>Dimer of alpha and beta chains. A typical microtubule is a hollow water-filled tube with an outer diameter of 25 nm and an inner diameter of 15 nM. Alpha-beta heterodimers associate head-to-tail to form protofilaments running lengthwise along the microtubule wall with the beta-tubulin subunit facing the microtubule plus end conferring a structural polarity. Microtubules usually have 13 protofilaments but different protofilament numbers can be found in some organisms and specialized cells.</text>
</comment>
<comment type="subcellular location">
    <subcellularLocation>
        <location>Cytoplasm</location>
        <location>Cytoskeleton</location>
    </subcellularLocation>
</comment>
<comment type="tissue specificity">
    <text>Preferential expression in germ cells.</text>
</comment>
<comment type="domain">
    <text evidence="2">The MREI motif is common among all beta-tubulin isoforms and may be critical for tubulin autoregulation.</text>
</comment>
<comment type="PTM">
    <text evidence="1">Some glutamate residues at the C-terminus are polyglycylated, resulting in polyglycine chains on the gamma-carboxyl group. Glycylation is mainly limited to tubulin incorporated into axonemes (cilia and flagella) whereas glutamylation is prevalent in neuronal cells, centrioles, axonemes, and the mitotic spindle. Both modifications can coexist on the same protein on adjacent residues, and lowering polyglycylation levels increases polyglutamylation, and reciprocally. The precise function of polyglycylation is still unclear.</text>
</comment>
<comment type="PTM">
    <text evidence="1 6">Some glutamate residues at the C-terminus are polyglutamylated, resulting in polyglutamate chains on the gamma-carboxyl group (By similarity). Polyglutamylation plays a key role in microtubule severing by spastin (SPAST). SPAST preferentially recognizes and acts on microtubules decorated with short polyglutamate tails: severing activity by SPAST increases as the number of glutamates per tubulin rises from one to eight, but decreases beyond this glutamylation threshold (By similarity).</text>
</comment>
<comment type="similarity">
    <text evidence="8">Belongs to the tubulin family.</text>
</comment>
<dbReference type="EMBL" id="L06232">
    <property type="protein sequence ID" value="AAA49977.1"/>
    <property type="molecule type" value="mRNA"/>
</dbReference>
<dbReference type="EMBL" id="BC054297">
    <property type="protein sequence ID" value="AAH54297.1"/>
    <property type="molecule type" value="mRNA"/>
</dbReference>
<dbReference type="PIR" id="A43839">
    <property type="entry name" value="A43839"/>
</dbReference>
<dbReference type="RefSeq" id="NP_001080566.1">
    <property type="nucleotide sequence ID" value="NM_001087097.2"/>
</dbReference>
<dbReference type="PDB" id="9EOK">
    <property type="method" value="EM"/>
    <property type="resolution" value="23.00 A"/>
    <property type="chains" value="B/F/Q/R/S/T/U/V/W/X/Y/Z/a/b/o/p/q/r/s=1-445"/>
</dbReference>
<dbReference type="PDB" id="9G0O">
    <property type="method" value="EM"/>
    <property type="resolution" value="3.30 A"/>
    <property type="chains" value="A/B/C/D/E/F=1-445"/>
</dbReference>
<dbReference type="PDB" id="9G0P">
    <property type="method" value="EM"/>
    <property type="resolution" value="3.00 A"/>
    <property type="chains" value="A/B/C/D/E/F=1-445"/>
</dbReference>
<dbReference type="PDB" id="9G0Q">
    <property type="method" value="EM"/>
    <property type="resolution" value="3.20 A"/>
    <property type="chains" value="A/B/C/D/E/F=1-445"/>
</dbReference>
<dbReference type="PDB" id="9G0R">
    <property type="method" value="EM"/>
    <property type="resolution" value="3.10 A"/>
    <property type="chains" value="A/B/C/D/E/F=1-445"/>
</dbReference>
<dbReference type="PDB" id="9G0S">
    <property type="method" value="EM"/>
    <property type="resolution" value="3.60 A"/>
    <property type="chains" value="A/B/C/D/E/F=1-445"/>
</dbReference>
<dbReference type="PDB" id="9G0T">
    <property type="method" value="EM"/>
    <property type="resolution" value="3.50 A"/>
    <property type="chains" value="A/B/C/D/E/F=1-445"/>
</dbReference>
<dbReference type="PDBsum" id="9EOK"/>
<dbReference type="PDBsum" id="9G0O"/>
<dbReference type="PDBsum" id="9G0P"/>
<dbReference type="PDBsum" id="9G0Q"/>
<dbReference type="PDBsum" id="9G0R"/>
<dbReference type="PDBsum" id="9G0S"/>
<dbReference type="PDBsum" id="9G0T"/>
<dbReference type="EMDB" id="EMD-19862"/>
<dbReference type="EMDB" id="EMD-50942"/>
<dbReference type="EMDB" id="EMD-50943"/>
<dbReference type="EMDB" id="EMD-50945"/>
<dbReference type="SMR" id="P30883"/>
<dbReference type="BioGRID" id="98500">
    <property type="interactions" value="1"/>
</dbReference>
<dbReference type="IntAct" id="P30883">
    <property type="interactions" value="2"/>
</dbReference>
<dbReference type="DNASU" id="380258"/>
<dbReference type="GeneID" id="380258"/>
<dbReference type="KEGG" id="xla:380258"/>
<dbReference type="AGR" id="Xenbase:XB-GENE-969453"/>
<dbReference type="CTD" id="380258"/>
<dbReference type="Xenbase" id="XB-GENE-969453">
    <property type="gene designation" value="tubb4b.L"/>
</dbReference>
<dbReference type="OMA" id="FWEVVNL"/>
<dbReference type="OrthoDB" id="1662883at2759"/>
<dbReference type="Proteomes" id="UP000186698">
    <property type="component" value="Chromosome 8L"/>
</dbReference>
<dbReference type="Bgee" id="380258">
    <property type="expression patterns" value="Expressed in ovary and 19 other cell types or tissues"/>
</dbReference>
<dbReference type="GO" id="GO:0005737">
    <property type="term" value="C:cytoplasm"/>
    <property type="evidence" value="ECO:0000318"/>
    <property type="project" value="GO_Central"/>
</dbReference>
<dbReference type="GO" id="GO:0005874">
    <property type="term" value="C:microtubule"/>
    <property type="evidence" value="ECO:0000318"/>
    <property type="project" value="GO_Central"/>
</dbReference>
<dbReference type="GO" id="GO:0005525">
    <property type="term" value="F:GTP binding"/>
    <property type="evidence" value="ECO:0000318"/>
    <property type="project" value="GO_Central"/>
</dbReference>
<dbReference type="GO" id="GO:0003924">
    <property type="term" value="F:GTPase activity"/>
    <property type="evidence" value="ECO:0007669"/>
    <property type="project" value="InterPro"/>
</dbReference>
<dbReference type="GO" id="GO:0046872">
    <property type="term" value="F:metal ion binding"/>
    <property type="evidence" value="ECO:0007669"/>
    <property type="project" value="UniProtKB-KW"/>
</dbReference>
<dbReference type="GO" id="GO:0005200">
    <property type="term" value="F:structural constituent of cytoskeleton"/>
    <property type="evidence" value="ECO:0000318"/>
    <property type="project" value="GO_Central"/>
</dbReference>
<dbReference type="GO" id="GO:0000226">
    <property type="term" value="P:microtubule cytoskeleton organization"/>
    <property type="evidence" value="ECO:0000318"/>
    <property type="project" value="GO_Central"/>
</dbReference>
<dbReference type="GO" id="GO:0000278">
    <property type="term" value="P:mitotic cell cycle"/>
    <property type="evidence" value="ECO:0000318"/>
    <property type="project" value="GO_Central"/>
</dbReference>
<dbReference type="CDD" id="cd02187">
    <property type="entry name" value="beta_tubulin"/>
    <property type="match status" value="1"/>
</dbReference>
<dbReference type="FunFam" id="1.10.287.600:FF:000006">
    <property type="entry name" value="Tubulin beta chain"/>
    <property type="match status" value="1"/>
</dbReference>
<dbReference type="FunFam" id="3.30.1330.20:FF:000002">
    <property type="entry name" value="Tubulin beta chain"/>
    <property type="match status" value="1"/>
</dbReference>
<dbReference type="FunFam" id="3.40.50.1440:FF:000003">
    <property type="entry name" value="Tubulin beta chain"/>
    <property type="match status" value="1"/>
</dbReference>
<dbReference type="Gene3D" id="1.10.287.600">
    <property type="entry name" value="Helix hairpin bin"/>
    <property type="match status" value="1"/>
</dbReference>
<dbReference type="Gene3D" id="3.30.1330.20">
    <property type="entry name" value="Tubulin/FtsZ, C-terminal domain"/>
    <property type="match status" value="1"/>
</dbReference>
<dbReference type="Gene3D" id="3.40.50.1440">
    <property type="entry name" value="Tubulin/FtsZ, GTPase domain"/>
    <property type="match status" value="1"/>
</dbReference>
<dbReference type="InterPro" id="IPR013838">
    <property type="entry name" value="Beta-tubulin_BS"/>
</dbReference>
<dbReference type="InterPro" id="IPR002453">
    <property type="entry name" value="Beta_tubulin"/>
</dbReference>
<dbReference type="InterPro" id="IPR008280">
    <property type="entry name" value="Tub_FtsZ_C"/>
</dbReference>
<dbReference type="InterPro" id="IPR000217">
    <property type="entry name" value="Tubulin"/>
</dbReference>
<dbReference type="InterPro" id="IPR037103">
    <property type="entry name" value="Tubulin/FtsZ-like_C"/>
</dbReference>
<dbReference type="InterPro" id="IPR018316">
    <property type="entry name" value="Tubulin/FtsZ_2-layer-sand-dom"/>
</dbReference>
<dbReference type="InterPro" id="IPR036525">
    <property type="entry name" value="Tubulin/FtsZ_GTPase_sf"/>
</dbReference>
<dbReference type="InterPro" id="IPR023123">
    <property type="entry name" value="Tubulin_C"/>
</dbReference>
<dbReference type="InterPro" id="IPR017975">
    <property type="entry name" value="Tubulin_CS"/>
</dbReference>
<dbReference type="InterPro" id="IPR003008">
    <property type="entry name" value="Tubulin_FtsZ_GTPase"/>
</dbReference>
<dbReference type="PANTHER" id="PTHR11588">
    <property type="entry name" value="TUBULIN"/>
    <property type="match status" value="1"/>
</dbReference>
<dbReference type="Pfam" id="PF00091">
    <property type="entry name" value="Tubulin"/>
    <property type="match status" value="1"/>
</dbReference>
<dbReference type="Pfam" id="PF03953">
    <property type="entry name" value="Tubulin_C"/>
    <property type="match status" value="1"/>
</dbReference>
<dbReference type="PRINTS" id="PR01163">
    <property type="entry name" value="BETATUBULIN"/>
</dbReference>
<dbReference type="PRINTS" id="PR01161">
    <property type="entry name" value="TUBULIN"/>
</dbReference>
<dbReference type="SMART" id="SM00864">
    <property type="entry name" value="Tubulin"/>
    <property type="match status" value="1"/>
</dbReference>
<dbReference type="SMART" id="SM00865">
    <property type="entry name" value="Tubulin_C"/>
    <property type="match status" value="1"/>
</dbReference>
<dbReference type="SUPFAM" id="SSF55307">
    <property type="entry name" value="Tubulin C-terminal domain-like"/>
    <property type="match status" value="1"/>
</dbReference>
<dbReference type="SUPFAM" id="SSF52490">
    <property type="entry name" value="Tubulin nucleotide-binding domain-like"/>
    <property type="match status" value="1"/>
</dbReference>
<dbReference type="PROSITE" id="PS00227">
    <property type="entry name" value="TUBULIN"/>
    <property type="match status" value="1"/>
</dbReference>
<dbReference type="PROSITE" id="PS00228">
    <property type="entry name" value="TUBULIN_B_AUTOREG"/>
    <property type="match status" value="1"/>
</dbReference>
<name>TBB4_XENLA</name>
<evidence type="ECO:0000250" key="1">
    <source>
        <dbReference type="UniProtKB" id="A2AQ07"/>
    </source>
</evidence>
<evidence type="ECO:0000250" key="2">
    <source>
        <dbReference type="UniProtKB" id="P07437"/>
    </source>
</evidence>
<evidence type="ECO:0000250" key="3">
    <source>
        <dbReference type="UniProtKB" id="P68363"/>
    </source>
</evidence>
<evidence type="ECO:0000250" key="4">
    <source>
        <dbReference type="UniProtKB" id="Q13509"/>
    </source>
</evidence>
<evidence type="ECO:0000250" key="5">
    <source>
        <dbReference type="UniProtKB" id="Q2T9S0"/>
    </source>
</evidence>
<evidence type="ECO:0000250" key="6">
    <source>
        <dbReference type="UniProtKB" id="Q71U36"/>
    </source>
</evidence>
<evidence type="ECO:0000256" key="7">
    <source>
        <dbReference type="SAM" id="MobiDB-lite"/>
    </source>
</evidence>
<evidence type="ECO:0000305" key="8"/>
<proteinExistence type="evidence at protein level"/>
<reference key="1">
    <citation type="journal article" date="1992" name="Differentiation">
        <title>The multiple beta-tubulin genes of Xenopus: isolation and developmental expression of a germ-cell isotype beta-tubulin gene.</title>
        <authorList>
            <person name="Bieker J.J."/>
            <person name="Yazdani-Buicky M."/>
        </authorList>
    </citation>
    <scope>NUCLEOTIDE SEQUENCE [MRNA]</scope>
    <source>
        <tissue>Oocyte</tissue>
    </source>
</reference>
<reference key="2">
    <citation type="submission" date="2003-06" db="EMBL/GenBank/DDBJ databases">
        <authorList>
            <consortium name="NIH - Xenopus Gene Collection (XGC) project"/>
        </authorList>
    </citation>
    <scope>NUCLEOTIDE SEQUENCE [LARGE SCALE MRNA]</scope>
</reference>
<protein>
    <recommendedName>
        <fullName>Tubulin beta-4 chain</fullName>
    </recommendedName>
</protein>
<keyword id="KW-0002">3D-structure</keyword>
<keyword id="KW-0963">Cytoplasm</keyword>
<keyword id="KW-0206">Cytoskeleton</keyword>
<keyword id="KW-0342">GTP-binding</keyword>
<keyword id="KW-1017">Isopeptide bond</keyword>
<keyword id="KW-0460">Magnesium</keyword>
<keyword id="KW-0479">Metal-binding</keyword>
<keyword id="KW-0493">Microtubule</keyword>
<keyword id="KW-0547">Nucleotide-binding</keyword>
<keyword id="KW-1185">Reference proteome</keyword>
<feature type="chain" id="PRO_0000048272" description="Tubulin beta-4 chain">
    <location>
        <begin position="1"/>
        <end position="445"/>
    </location>
</feature>
<feature type="region of interest" description="Disordered" evidence="7">
    <location>
        <begin position="425"/>
        <end position="445"/>
    </location>
</feature>
<feature type="short sequence motif" description="MREI motif" evidence="2">
    <location>
        <begin position="1"/>
        <end position="4"/>
    </location>
</feature>
<feature type="compositionally biased region" description="Acidic residues" evidence="7">
    <location>
        <begin position="429"/>
        <end position="445"/>
    </location>
</feature>
<feature type="binding site" evidence="4">
    <location>
        <position position="11"/>
    </location>
    <ligand>
        <name>GTP</name>
        <dbReference type="ChEBI" id="CHEBI:37565"/>
    </ligand>
</feature>
<feature type="binding site" evidence="3">
    <location>
        <position position="69"/>
    </location>
    <ligand>
        <name>GTP</name>
        <dbReference type="ChEBI" id="CHEBI:37565"/>
    </ligand>
</feature>
<feature type="binding site" evidence="3">
    <location>
        <position position="69"/>
    </location>
    <ligand>
        <name>Mg(2+)</name>
        <dbReference type="ChEBI" id="CHEBI:18420"/>
    </ligand>
</feature>
<feature type="binding site" evidence="4">
    <location>
        <position position="138"/>
    </location>
    <ligand>
        <name>GTP</name>
        <dbReference type="ChEBI" id="CHEBI:37565"/>
    </ligand>
</feature>
<feature type="binding site" evidence="4">
    <location>
        <position position="142"/>
    </location>
    <ligand>
        <name>GTP</name>
        <dbReference type="ChEBI" id="CHEBI:37565"/>
    </ligand>
</feature>
<feature type="binding site" evidence="4">
    <location>
        <position position="143"/>
    </location>
    <ligand>
        <name>GTP</name>
        <dbReference type="ChEBI" id="CHEBI:37565"/>
    </ligand>
</feature>
<feature type="binding site" evidence="4">
    <location>
        <position position="144"/>
    </location>
    <ligand>
        <name>GTP</name>
        <dbReference type="ChEBI" id="CHEBI:37565"/>
    </ligand>
</feature>
<feature type="binding site" evidence="4">
    <location>
        <position position="204"/>
    </location>
    <ligand>
        <name>GTP</name>
        <dbReference type="ChEBI" id="CHEBI:37565"/>
    </ligand>
</feature>
<feature type="binding site" evidence="4">
    <location>
        <position position="226"/>
    </location>
    <ligand>
        <name>GTP</name>
        <dbReference type="ChEBI" id="CHEBI:37565"/>
    </ligand>
</feature>
<feature type="modified residue" description="5-glutamyl polyglutamate" evidence="5">
    <location>
        <position position="438"/>
    </location>
</feature>
<organism>
    <name type="scientific">Xenopus laevis</name>
    <name type="common">African clawed frog</name>
    <dbReference type="NCBI Taxonomy" id="8355"/>
    <lineage>
        <taxon>Eukaryota</taxon>
        <taxon>Metazoa</taxon>
        <taxon>Chordata</taxon>
        <taxon>Craniata</taxon>
        <taxon>Vertebrata</taxon>
        <taxon>Euteleostomi</taxon>
        <taxon>Amphibia</taxon>
        <taxon>Batrachia</taxon>
        <taxon>Anura</taxon>
        <taxon>Pipoidea</taxon>
        <taxon>Pipidae</taxon>
        <taxon>Xenopodinae</taxon>
        <taxon>Xenopus</taxon>
        <taxon>Xenopus</taxon>
    </lineage>
</organism>